<accession>A8W3E2</accession>
<comment type="subcellular location">
    <subcellularLocation>
        <location>Plastid</location>
    </subcellularLocation>
</comment>
<comment type="similarity">
    <text evidence="1">Belongs to the bacterial ribosomal protein bL33 family.</text>
</comment>
<comment type="caution">
    <text evidence="2">Young tissue from this organism is photosynthetic and contains some thylakoids, although the photosynthetic activity does not exceed the light compensation point.</text>
</comment>
<geneLocation type="plastid"/>
<reference key="1">
    <citation type="journal article" date="2007" name="BMC Plant Biol.">
        <title>Complete plastid genome sequences suggest strong selection for retention of photosynthetic genes in the parasitic plant genus Cuscuta.</title>
        <authorList>
            <person name="McNeal J.R."/>
            <person name="Kuehl J.V."/>
            <person name="Boore J.L."/>
            <person name="dePamphilis C.W."/>
        </authorList>
    </citation>
    <scope>NUCLEOTIDE SEQUENCE [LARGE SCALE GENOMIC DNA]</scope>
</reference>
<protein>
    <recommendedName>
        <fullName evidence="1">Large ribosomal subunit protein bL33c</fullName>
    </recommendedName>
    <alternativeName>
        <fullName evidence="2">50S ribosomal protein L33, plastid</fullName>
    </alternativeName>
</protein>
<sequence length="68" mass="7857">MAKNKDVRVTVILECTSCAQNDVHGNKVATGISRYITQKNRHNTPNRLEFQKFCPRCYKHTLHGEIKN</sequence>
<feature type="chain" id="PRO_0000356796" description="Large ribosomal subunit protein bL33c">
    <location>
        <begin position="1"/>
        <end position="68"/>
    </location>
</feature>
<keyword id="KW-0934">Plastid</keyword>
<keyword id="KW-0687">Ribonucleoprotein</keyword>
<keyword id="KW-0689">Ribosomal protein</keyword>
<organism>
    <name type="scientific">Cuscuta exaltata</name>
    <name type="common">Tall dodder</name>
    <dbReference type="NCBI Taxonomy" id="476139"/>
    <lineage>
        <taxon>Eukaryota</taxon>
        <taxon>Viridiplantae</taxon>
        <taxon>Streptophyta</taxon>
        <taxon>Embryophyta</taxon>
        <taxon>Tracheophyta</taxon>
        <taxon>Spermatophyta</taxon>
        <taxon>Magnoliopsida</taxon>
        <taxon>eudicotyledons</taxon>
        <taxon>Gunneridae</taxon>
        <taxon>Pentapetalae</taxon>
        <taxon>asterids</taxon>
        <taxon>lamiids</taxon>
        <taxon>Solanales</taxon>
        <taxon>Convolvulaceae</taxon>
        <taxon>Cuscuteae</taxon>
        <taxon>Cuscuta</taxon>
        <taxon>Cuscuta subgen. Monogynella</taxon>
    </lineage>
</organism>
<gene>
    <name evidence="1" type="primary">rpl33</name>
</gene>
<dbReference type="EMBL" id="EU189132">
    <property type="protein sequence ID" value="ABW83713.1"/>
    <property type="molecule type" value="Genomic_DNA"/>
</dbReference>
<dbReference type="RefSeq" id="YP_001542549.1">
    <property type="nucleotide sequence ID" value="NC_009963.1"/>
</dbReference>
<dbReference type="GeneID" id="5729662"/>
<dbReference type="GO" id="GO:0009536">
    <property type="term" value="C:plastid"/>
    <property type="evidence" value="ECO:0007669"/>
    <property type="project" value="UniProtKB-SubCell"/>
</dbReference>
<dbReference type="GO" id="GO:1990904">
    <property type="term" value="C:ribonucleoprotein complex"/>
    <property type="evidence" value="ECO:0007669"/>
    <property type="project" value="UniProtKB-KW"/>
</dbReference>
<dbReference type="GO" id="GO:0005840">
    <property type="term" value="C:ribosome"/>
    <property type="evidence" value="ECO:0007669"/>
    <property type="project" value="UniProtKB-KW"/>
</dbReference>
<dbReference type="GO" id="GO:0003735">
    <property type="term" value="F:structural constituent of ribosome"/>
    <property type="evidence" value="ECO:0007669"/>
    <property type="project" value="InterPro"/>
</dbReference>
<dbReference type="GO" id="GO:0006412">
    <property type="term" value="P:translation"/>
    <property type="evidence" value="ECO:0007669"/>
    <property type="project" value="InterPro"/>
</dbReference>
<dbReference type="Gene3D" id="2.20.28.120">
    <property type="entry name" value="Ribosomal protein L33"/>
    <property type="match status" value="1"/>
</dbReference>
<dbReference type="HAMAP" id="MF_00294">
    <property type="entry name" value="Ribosomal_bL33"/>
    <property type="match status" value="1"/>
</dbReference>
<dbReference type="InterPro" id="IPR001705">
    <property type="entry name" value="Ribosomal_bL33"/>
</dbReference>
<dbReference type="InterPro" id="IPR018264">
    <property type="entry name" value="Ribosomal_bL33_CS"/>
</dbReference>
<dbReference type="InterPro" id="IPR038584">
    <property type="entry name" value="Ribosomal_bL33_sf"/>
</dbReference>
<dbReference type="InterPro" id="IPR011332">
    <property type="entry name" value="Ribosomal_zn-bd"/>
</dbReference>
<dbReference type="NCBIfam" id="NF001764">
    <property type="entry name" value="PRK00504.1"/>
    <property type="match status" value="1"/>
</dbReference>
<dbReference type="NCBIfam" id="NF001860">
    <property type="entry name" value="PRK00595.1"/>
    <property type="match status" value="1"/>
</dbReference>
<dbReference type="NCBIfam" id="TIGR01023">
    <property type="entry name" value="rpmG_bact"/>
    <property type="match status" value="1"/>
</dbReference>
<dbReference type="PANTHER" id="PTHR43168">
    <property type="entry name" value="50S RIBOSOMAL PROTEIN L33, CHLOROPLASTIC"/>
    <property type="match status" value="1"/>
</dbReference>
<dbReference type="PANTHER" id="PTHR43168:SF2">
    <property type="entry name" value="LARGE RIBOSOMAL SUBUNIT PROTEIN BL33C"/>
    <property type="match status" value="1"/>
</dbReference>
<dbReference type="Pfam" id="PF00471">
    <property type="entry name" value="Ribosomal_L33"/>
    <property type="match status" value="1"/>
</dbReference>
<dbReference type="SUPFAM" id="SSF57829">
    <property type="entry name" value="Zn-binding ribosomal proteins"/>
    <property type="match status" value="1"/>
</dbReference>
<dbReference type="PROSITE" id="PS00582">
    <property type="entry name" value="RIBOSOMAL_L33"/>
    <property type="match status" value="1"/>
</dbReference>
<name>RK33_CUSEX</name>
<evidence type="ECO:0000255" key="1">
    <source>
        <dbReference type="HAMAP-Rule" id="MF_00294"/>
    </source>
</evidence>
<evidence type="ECO:0000305" key="2"/>
<proteinExistence type="inferred from homology"/>